<comment type="catalytic activity">
    <reaction>
        <text>L-serine = pyruvate + NH4(+)</text>
        <dbReference type="Rhea" id="RHEA:19169"/>
        <dbReference type="ChEBI" id="CHEBI:15361"/>
        <dbReference type="ChEBI" id="CHEBI:28938"/>
        <dbReference type="ChEBI" id="CHEBI:33384"/>
        <dbReference type="EC" id="4.3.1.17"/>
    </reaction>
</comment>
<comment type="cofactor">
    <cofactor evidence="1">
        <name>[4Fe-4S] cluster</name>
        <dbReference type="ChEBI" id="CHEBI:49883"/>
    </cofactor>
    <text evidence="1">Binds 1 [4Fe-4S] cluster.</text>
</comment>
<comment type="pathway">
    <text>Carbohydrate biosynthesis; gluconeogenesis.</text>
</comment>
<comment type="similarity">
    <text evidence="1">Belongs to the iron-sulfur dependent L-serine dehydratase family.</text>
</comment>
<organism>
    <name type="scientific">Haemophilus influenzae (strain ATCC 51907 / DSM 11121 / KW20 / Rd)</name>
    <dbReference type="NCBI Taxonomy" id="71421"/>
    <lineage>
        <taxon>Bacteria</taxon>
        <taxon>Pseudomonadati</taxon>
        <taxon>Pseudomonadota</taxon>
        <taxon>Gammaproteobacteria</taxon>
        <taxon>Pasteurellales</taxon>
        <taxon>Pasteurellaceae</taxon>
        <taxon>Haemophilus</taxon>
    </lineage>
</organism>
<dbReference type="EC" id="4.3.1.17"/>
<dbReference type="EMBL" id="L42023">
    <property type="protein sequence ID" value="AAC21953.1"/>
    <property type="molecule type" value="Genomic_DNA"/>
</dbReference>
<dbReference type="RefSeq" id="NP_438455.1">
    <property type="nucleotide sequence ID" value="NC_000907.1"/>
</dbReference>
<dbReference type="SMR" id="P71349"/>
<dbReference type="STRING" id="71421.HI_0288"/>
<dbReference type="EnsemblBacteria" id="AAC21953">
    <property type="protein sequence ID" value="AAC21953"/>
    <property type="gene ID" value="HI_0288"/>
</dbReference>
<dbReference type="KEGG" id="hin:HI_0288"/>
<dbReference type="PATRIC" id="fig|71421.8.peg.304"/>
<dbReference type="eggNOG" id="COG1760">
    <property type="taxonomic scope" value="Bacteria"/>
</dbReference>
<dbReference type="HOGENOM" id="CLU_022305_0_1_6"/>
<dbReference type="OrthoDB" id="9805537at2"/>
<dbReference type="PhylomeDB" id="P71349"/>
<dbReference type="BioCyc" id="HINF71421:G1GJ1-306-MONOMER"/>
<dbReference type="UniPathway" id="UPA00138"/>
<dbReference type="Proteomes" id="UP000000579">
    <property type="component" value="Chromosome"/>
</dbReference>
<dbReference type="GO" id="GO:0051539">
    <property type="term" value="F:4 iron, 4 sulfur cluster binding"/>
    <property type="evidence" value="ECO:0007669"/>
    <property type="project" value="UniProtKB-KW"/>
</dbReference>
<dbReference type="GO" id="GO:0003941">
    <property type="term" value="F:L-serine ammonia-lyase activity"/>
    <property type="evidence" value="ECO:0000318"/>
    <property type="project" value="GO_Central"/>
</dbReference>
<dbReference type="GO" id="GO:0046872">
    <property type="term" value="F:metal ion binding"/>
    <property type="evidence" value="ECO:0007669"/>
    <property type="project" value="UniProtKB-KW"/>
</dbReference>
<dbReference type="GO" id="GO:0006094">
    <property type="term" value="P:gluconeogenesis"/>
    <property type="evidence" value="ECO:0007669"/>
    <property type="project" value="UniProtKB-UniPathway"/>
</dbReference>
<dbReference type="FunFam" id="3.30.1330.90:FF:000001">
    <property type="entry name" value="L-serine ammonia-lyase 1"/>
    <property type="match status" value="1"/>
</dbReference>
<dbReference type="Gene3D" id="3.30.1330.90">
    <property type="entry name" value="D-3-phosphoglycerate dehydrogenase, domain 3"/>
    <property type="match status" value="1"/>
</dbReference>
<dbReference type="InterPro" id="IPR029009">
    <property type="entry name" value="ASB_dom_sf"/>
</dbReference>
<dbReference type="InterPro" id="IPR051318">
    <property type="entry name" value="Fe-S_L-Ser"/>
</dbReference>
<dbReference type="InterPro" id="IPR004644">
    <property type="entry name" value="Fe-S_L-Ser_mono"/>
</dbReference>
<dbReference type="InterPro" id="IPR005130">
    <property type="entry name" value="Ser_deHydtase-like_asu"/>
</dbReference>
<dbReference type="InterPro" id="IPR005131">
    <property type="entry name" value="Ser_deHydtase_bsu"/>
</dbReference>
<dbReference type="NCBIfam" id="TIGR00720">
    <property type="entry name" value="sda_mono"/>
    <property type="match status" value="1"/>
</dbReference>
<dbReference type="PANTHER" id="PTHR30182">
    <property type="entry name" value="L-SERINE DEHYDRATASE"/>
    <property type="match status" value="1"/>
</dbReference>
<dbReference type="PANTHER" id="PTHR30182:SF1">
    <property type="entry name" value="L-SERINE DEHYDRATASE 1"/>
    <property type="match status" value="1"/>
</dbReference>
<dbReference type="Pfam" id="PF03313">
    <property type="entry name" value="SDH_alpha"/>
    <property type="match status" value="1"/>
</dbReference>
<dbReference type="Pfam" id="PF03315">
    <property type="entry name" value="SDH_beta"/>
    <property type="match status" value="1"/>
</dbReference>
<dbReference type="SUPFAM" id="SSF143548">
    <property type="entry name" value="Serine metabolism enzymes domain"/>
    <property type="match status" value="1"/>
</dbReference>
<accession>P71349</accession>
<reference key="1">
    <citation type="journal article" date="1995" name="Science">
        <title>Whole-genome random sequencing and assembly of Haemophilus influenzae Rd.</title>
        <authorList>
            <person name="Fleischmann R.D."/>
            <person name="Adams M.D."/>
            <person name="White O."/>
            <person name="Clayton R.A."/>
            <person name="Kirkness E.F."/>
            <person name="Kerlavage A.R."/>
            <person name="Bult C.J."/>
            <person name="Tomb J.-F."/>
            <person name="Dougherty B.A."/>
            <person name="Merrick J.M."/>
            <person name="McKenney K."/>
            <person name="Sutton G.G."/>
            <person name="FitzHugh W."/>
            <person name="Fields C.A."/>
            <person name="Gocayne J.D."/>
            <person name="Scott J.D."/>
            <person name="Shirley R."/>
            <person name="Liu L.-I."/>
            <person name="Glodek A."/>
            <person name="Kelley J.M."/>
            <person name="Weidman J.F."/>
            <person name="Phillips C.A."/>
            <person name="Spriggs T."/>
            <person name="Hedblom E."/>
            <person name="Cotton M.D."/>
            <person name="Utterback T.R."/>
            <person name="Hanna M.C."/>
            <person name="Nguyen D.T."/>
            <person name="Saudek D.M."/>
            <person name="Brandon R.C."/>
            <person name="Fine L.D."/>
            <person name="Fritchman J.L."/>
            <person name="Fuhrmann J.L."/>
            <person name="Geoghagen N.S.M."/>
            <person name="Gnehm C.L."/>
            <person name="McDonald L.A."/>
            <person name="Small K.V."/>
            <person name="Fraser C.M."/>
            <person name="Smith H.O."/>
            <person name="Venter J.C."/>
        </authorList>
    </citation>
    <scope>NUCLEOTIDE SEQUENCE [LARGE SCALE GENOMIC DNA]</scope>
    <source>
        <strain>ATCC 51907 / DSM 11121 / KW20 / Rd</strain>
    </source>
</reference>
<reference key="2">
    <citation type="submission" date="1996-09" db="EMBL/GenBank/DDBJ databases">
        <authorList>
            <person name="White O."/>
            <person name="Clayton R.A."/>
            <person name="Kerlavage A.R."/>
            <person name="Fleischmann R.D."/>
        </authorList>
    </citation>
    <scope>SEQUENCE REVISION</scope>
</reference>
<proteinExistence type="inferred from homology"/>
<protein>
    <recommendedName>
        <fullName>L-serine dehydratase</fullName>
        <shortName>SDH</shortName>
        <ecNumber>4.3.1.17</ecNumber>
    </recommendedName>
    <alternativeName>
        <fullName>L-serine deaminase</fullName>
        <shortName>L-SD</shortName>
    </alternativeName>
</protein>
<name>SDHL_HAEIN</name>
<evidence type="ECO:0000305" key="1"/>
<feature type="chain" id="PRO_0000171906" description="L-serine dehydratase">
    <location>
        <begin position="1"/>
        <end position="455"/>
    </location>
</feature>
<gene>
    <name type="primary">sdaA</name>
    <name type="ordered locus">HI_0288</name>
</gene>
<sequence length="455" mass="49538">MISVFDMFKVGIGPSSSHTVGPMKAGKQFIDDLIKRNQFEQTTEIHVDVYGSLSMTGRGHSTDIAIIMGLAGYLPHNVDIDMISGFIEKVKQTALLPINVGQKIVKFDFENNLIFHRTFLKLHENGMTITALDENRTELYRQTYYSIGGGFIVDEAHFGKEEKNTVQVPYPYKNAEDILKHCSDNGLMLSTVMLENEIALNGKEAVSAHLENVWKTMQACIEHGIHTEGILPGPLRVPRRAASLYRALQANTNLSNDPMRVIDWVNMFALAVNEENAAGGRVVTAPTNGACGIIPAVLAYYEKFISPLTPEIIERYLLAAGMIGSLYKMNASISGAEVGCQGEVGVACSMAAAGLAEILGGNPLQVCIAAEIAMEHNLGLTCDPVGGQVQVPCIERNAIASVKAINASRMALRRTTNPRVTLDKVIETMYETGKDMNAKYRETSQGGLAVKIVCN</sequence>
<keyword id="KW-0004">4Fe-4S</keyword>
<keyword id="KW-0312">Gluconeogenesis</keyword>
<keyword id="KW-0408">Iron</keyword>
<keyword id="KW-0411">Iron-sulfur</keyword>
<keyword id="KW-0456">Lyase</keyword>
<keyword id="KW-0479">Metal-binding</keyword>
<keyword id="KW-1185">Reference proteome</keyword>